<evidence type="ECO:0000255" key="1">
    <source>
        <dbReference type="HAMAP-Rule" id="MF_00193"/>
    </source>
</evidence>
<name>NADE_SHEWM</name>
<comment type="function">
    <text evidence="1">Catalyzes the ATP-dependent amidation of deamido-NAD to form NAD. Uses ammonia as a nitrogen source.</text>
</comment>
<comment type="catalytic activity">
    <reaction evidence="1">
        <text>deamido-NAD(+) + NH4(+) + ATP = AMP + diphosphate + NAD(+) + H(+)</text>
        <dbReference type="Rhea" id="RHEA:21188"/>
        <dbReference type="ChEBI" id="CHEBI:15378"/>
        <dbReference type="ChEBI" id="CHEBI:28938"/>
        <dbReference type="ChEBI" id="CHEBI:30616"/>
        <dbReference type="ChEBI" id="CHEBI:33019"/>
        <dbReference type="ChEBI" id="CHEBI:57540"/>
        <dbReference type="ChEBI" id="CHEBI:58437"/>
        <dbReference type="ChEBI" id="CHEBI:456215"/>
        <dbReference type="EC" id="6.3.1.5"/>
    </reaction>
</comment>
<comment type="pathway">
    <text evidence="1">Cofactor biosynthesis; NAD(+) biosynthesis; NAD(+) from deamido-NAD(+) (ammonia route): step 1/1.</text>
</comment>
<comment type="subunit">
    <text evidence="1">Homodimer.</text>
</comment>
<comment type="similarity">
    <text evidence="1">Belongs to the NAD synthetase family.</text>
</comment>
<protein>
    <recommendedName>
        <fullName evidence="1">NH(3)-dependent NAD(+) synthetase</fullName>
        <ecNumber evidence="1">6.3.1.5</ecNumber>
    </recommendedName>
</protein>
<reference key="1">
    <citation type="submission" date="2008-02" db="EMBL/GenBank/DDBJ databases">
        <title>Complete sequence of Shewanella woodyi ATCC 51908.</title>
        <authorList>
            <consortium name="US DOE Joint Genome Institute"/>
            <person name="Copeland A."/>
            <person name="Lucas S."/>
            <person name="Lapidus A."/>
            <person name="Glavina del Rio T."/>
            <person name="Dalin E."/>
            <person name="Tice H."/>
            <person name="Bruce D."/>
            <person name="Goodwin L."/>
            <person name="Pitluck S."/>
            <person name="Sims D."/>
            <person name="Brettin T."/>
            <person name="Detter J.C."/>
            <person name="Han C."/>
            <person name="Kuske C.R."/>
            <person name="Schmutz J."/>
            <person name="Larimer F."/>
            <person name="Land M."/>
            <person name="Hauser L."/>
            <person name="Kyrpides N."/>
            <person name="Lykidis A."/>
            <person name="Zhao J.-S."/>
            <person name="Richardson P."/>
        </authorList>
    </citation>
    <scope>NUCLEOTIDE SEQUENCE [LARGE SCALE GENOMIC DNA]</scope>
    <source>
        <strain>ATCC 51908 / MS32</strain>
    </source>
</reference>
<dbReference type="EC" id="6.3.1.5" evidence="1"/>
<dbReference type="EMBL" id="CP000961">
    <property type="protein sequence ID" value="ACA87067.1"/>
    <property type="molecule type" value="Genomic_DNA"/>
</dbReference>
<dbReference type="RefSeq" id="WP_012325403.1">
    <property type="nucleotide sequence ID" value="NC_010506.1"/>
</dbReference>
<dbReference type="SMR" id="B1KJ47"/>
<dbReference type="STRING" id="392500.Swoo_2791"/>
<dbReference type="KEGG" id="swd:Swoo_2791"/>
<dbReference type="eggNOG" id="COG0171">
    <property type="taxonomic scope" value="Bacteria"/>
</dbReference>
<dbReference type="HOGENOM" id="CLU_059327_3_0_6"/>
<dbReference type="UniPathway" id="UPA00253">
    <property type="reaction ID" value="UER00333"/>
</dbReference>
<dbReference type="Proteomes" id="UP000002168">
    <property type="component" value="Chromosome"/>
</dbReference>
<dbReference type="GO" id="GO:0005737">
    <property type="term" value="C:cytoplasm"/>
    <property type="evidence" value="ECO:0007669"/>
    <property type="project" value="InterPro"/>
</dbReference>
<dbReference type="GO" id="GO:0005524">
    <property type="term" value="F:ATP binding"/>
    <property type="evidence" value="ECO:0007669"/>
    <property type="project" value="UniProtKB-UniRule"/>
</dbReference>
<dbReference type="GO" id="GO:0004359">
    <property type="term" value="F:glutaminase activity"/>
    <property type="evidence" value="ECO:0007669"/>
    <property type="project" value="InterPro"/>
</dbReference>
<dbReference type="GO" id="GO:0046872">
    <property type="term" value="F:metal ion binding"/>
    <property type="evidence" value="ECO:0007669"/>
    <property type="project" value="UniProtKB-KW"/>
</dbReference>
<dbReference type="GO" id="GO:0003952">
    <property type="term" value="F:NAD+ synthase (glutamine-hydrolyzing) activity"/>
    <property type="evidence" value="ECO:0007669"/>
    <property type="project" value="InterPro"/>
</dbReference>
<dbReference type="GO" id="GO:0008795">
    <property type="term" value="F:NAD+ synthase activity"/>
    <property type="evidence" value="ECO:0007669"/>
    <property type="project" value="UniProtKB-UniRule"/>
</dbReference>
<dbReference type="GO" id="GO:0009435">
    <property type="term" value="P:NAD biosynthetic process"/>
    <property type="evidence" value="ECO:0007669"/>
    <property type="project" value="UniProtKB-UniRule"/>
</dbReference>
<dbReference type="CDD" id="cd00553">
    <property type="entry name" value="NAD_synthase"/>
    <property type="match status" value="1"/>
</dbReference>
<dbReference type="FunFam" id="3.40.50.620:FF:000015">
    <property type="entry name" value="NH(3)-dependent NAD(+) synthetase"/>
    <property type="match status" value="1"/>
</dbReference>
<dbReference type="Gene3D" id="3.40.50.620">
    <property type="entry name" value="HUPs"/>
    <property type="match status" value="1"/>
</dbReference>
<dbReference type="HAMAP" id="MF_00193">
    <property type="entry name" value="NadE_ammonia_dep"/>
    <property type="match status" value="1"/>
</dbReference>
<dbReference type="InterPro" id="IPR022310">
    <property type="entry name" value="NAD/GMP_synthase"/>
</dbReference>
<dbReference type="InterPro" id="IPR003694">
    <property type="entry name" value="NAD_synthase"/>
</dbReference>
<dbReference type="InterPro" id="IPR022926">
    <property type="entry name" value="NH(3)-dep_NAD(+)_synth"/>
</dbReference>
<dbReference type="InterPro" id="IPR014729">
    <property type="entry name" value="Rossmann-like_a/b/a_fold"/>
</dbReference>
<dbReference type="NCBIfam" id="TIGR00552">
    <property type="entry name" value="nadE"/>
    <property type="match status" value="1"/>
</dbReference>
<dbReference type="NCBIfam" id="NF001979">
    <property type="entry name" value="PRK00768.1"/>
    <property type="match status" value="1"/>
</dbReference>
<dbReference type="PANTHER" id="PTHR23090">
    <property type="entry name" value="NH 3 /GLUTAMINE-DEPENDENT NAD + SYNTHETASE"/>
    <property type="match status" value="1"/>
</dbReference>
<dbReference type="PANTHER" id="PTHR23090:SF7">
    <property type="entry name" value="NH(3)-DEPENDENT NAD(+) SYNTHETASE"/>
    <property type="match status" value="1"/>
</dbReference>
<dbReference type="Pfam" id="PF02540">
    <property type="entry name" value="NAD_synthase"/>
    <property type="match status" value="1"/>
</dbReference>
<dbReference type="SUPFAM" id="SSF52402">
    <property type="entry name" value="Adenine nucleotide alpha hydrolases-like"/>
    <property type="match status" value="1"/>
</dbReference>
<organism>
    <name type="scientific">Shewanella woodyi (strain ATCC 51908 / MS32)</name>
    <dbReference type="NCBI Taxonomy" id="392500"/>
    <lineage>
        <taxon>Bacteria</taxon>
        <taxon>Pseudomonadati</taxon>
        <taxon>Pseudomonadota</taxon>
        <taxon>Gammaproteobacteria</taxon>
        <taxon>Alteromonadales</taxon>
        <taxon>Shewanellaceae</taxon>
        <taxon>Shewanella</taxon>
    </lineage>
</organism>
<feature type="chain" id="PRO_1000099046" description="NH(3)-dependent NAD(+) synthetase">
    <location>
        <begin position="1"/>
        <end position="276"/>
    </location>
</feature>
<feature type="binding site" evidence="1">
    <location>
        <begin position="43"/>
        <end position="50"/>
    </location>
    <ligand>
        <name>ATP</name>
        <dbReference type="ChEBI" id="CHEBI:30616"/>
    </ligand>
</feature>
<feature type="binding site" evidence="1">
    <location>
        <position position="49"/>
    </location>
    <ligand>
        <name>Mg(2+)</name>
        <dbReference type="ChEBI" id="CHEBI:18420"/>
    </ligand>
</feature>
<feature type="binding site" evidence="1">
    <location>
        <position position="146"/>
    </location>
    <ligand>
        <name>deamido-NAD(+)</name>
        <dbReference type="ChEBI" id="CHEBI:58437"/>
    </ligand>
</feature>
<feature type="binding site" evidence="1">
    <location>
        <position position="166"/>
    </location>
    <ligand>
        <name>ATP</name>
        <dbReference type="ChEBI" id="CHEBI:30616"/>
    </ligand>
</feature>
<feature type="binding site" evidence="1">
    <location>
        <position position="171"/>
    </location>
    <ligand>
        <name>Mg(2+)</name>
        <dbReference type="ChEBI" id="CHEBI:18420"/>
    </ligand>
</feature>
<feature type="binding site" evidence="1">
    <location>
        <position position="179"/>
    </location>
    <ligand>
        <name>deamido-NAD(+)</name>
        <dbReference type="ChEBI" id="CHEBI:58437"/>
    </ligand>
</feature>
<feature type="binding site" evidence="1">
    <location>
        <position position="186"/>
    </location>
    <ligand>
        <name>deamido-NAD(+)</name>
        <dbReference type="ChEBI" id="CHEBI:58437"/>
    </ligand>
</feature>
<feature type="binding site" evidence="1">
    <location>
        <position position="195"/>
    </location>
    <ligand>
        <name>ATP</name>
        <dbReference type="ChEBI" id="CHEBI:30616"/>
    </ligand>
</feature>
<feature type="binding site" evidence="1">
    <location>
        <position position="217"/>
    </location>
    <ligand>
        <name>ATP</name>
        <dbReference type="ChEBI" id="CHEBI:30616"/>
    </ligand>
</feature>
<feature type="binding site" evidence="1">
    <location>
        <begin position="266"/>
        <end position="267"/>
    </location>
    <ligand>
        <name>deamido-NAD(+)</name>
        <dbReference type="ChEBI" id="CHEBI:58437"/>
    </ligand>
</feature>
<proteinExistence type="inferred from homology"/>
<sequence length="276" mass="30302">MKGQILREMKVQPAIEASYEVERRIAFIKLKLKESHTQTLVLGISGGVDSSLAGKLCQLAVEQLNEETSSELYQFIAVRLPYHVQKDEDEAQLACQFISPSKLVTVNIHDGVSGVHQETLSGLTSAGIEVCDSTKLDFVKGNVKARMRMIAQYEIAGLTGGLVVGTDHSAENITGFYTKWGDGACDLAPLFGLNKRQVRQLAAYLGAPAVLVEKAPTADLEEDKPQLEDEVALGLTYEQIDDFLEGKAVDSYVEDRLIGIYKATQHKREAIPTIYD</sequence>
<accession>B1KJ47</accession>
<gene>
    <name evidence="1" type="primary">nadE</name>
    <name type="ordered locus">Swoo_2791</name>
</gene>
<keyword id="KW-0067">ATP-binding</keyword>
<keyword id="KW-0436">Ligase</keyword>
<keyword id="KW-0460">Magnesium</keyword>
<keyword id="KW-0479">Metal-binding</keyword>
<keyword id="KW-0520">NAD</keyword>
<keyword id="KW-0547">Nucleotide-binding</keyword>
<keyword id="KW-1185">Reference proteome</keyword>